<protein>
    <recommendedName>
        <fullName evidence="1">S-adenosylmethionine synthase</fullName>
        <shortName evidence="1">AdoMet synthase</shortName>
        <ecNumber evidence="1">2.5.1.6</ecNumber>
    </recommendedName>
    <alternativeName>
        <fullName evidence="1">MAT</fullName>
    </alternativeName>
    <alternativeName>
        <fullName evidence="1">Methionine adenosyltransferase</fullName>
    </alternativeName>
</protein>
<gene>
    <name evidence="1" type="primary">metK</name>
    <name type="ordered locus">HI_1172</name>
</gene>
<feature type="chain" id="PRO_0000174529" description="S-adenosylmethionine synthase">
    <location>
        <begin position="1"/>
        <end position="384"/>
    </location>
</feature>
<feature type="region of interest" description="Flexible loop" evidence="1">
    <location>
        <begin position="99"/>
        <end position="109"/>
    </location>
</feature>
<feature type="binding site" description="in other chain" evidence="1">
    <location>
        <position position="15"/>
    </location>
    <ligand>
        <name>ATP</name>
        <dbReference type="ChEBI" id="CHEBI:30616"/>
        <note>ligand shared between two neighboring subunits</note>
    </ligand>
</feature>
<feature type="binding site" evidence="1">
    <location>
        <position position="17"/>
    </location>
    <ligand>
        <name>Mg(2+)</name>
        <dbReference type="ChEBI" id="CHEBI:18420"/>
    </ligand>
</feature>
<feature type="binding site" evidence="1">
    <location>
        <position position="43"/>
    </location>
    <ligand>
        <name>K(+)</name>
        <dbReference type="ChEBI" id="CHEBI:29103"/>
    </ligand>
</feature>
<feature type="binding site" description="in other chain" evidence="1">
    <location>
        <position position="56"/>
    </location>
    <ligand>
        <name>L-methionine</name>
        <dbReference type="ChEBI" id="CHEBI:57844"/>
        <note>ligand shared between two neighboring subunits</note>
    </ligand>
</feature>
<feature type="binding site" description="in other chain" evidence="1">
    <location>
        <position position="99"/>
    </location>
    <ligand>
        <name>L-methionine</name>
        <dbReference type="ChEBI" id="CHEBI:57844"/>
        <note>ligand shared between two neighboring subunits</note>
    </ligand>
</feature>
<feature type="binding site" description="in other chain" evidence="1">
    <location>
        <begin position="164"/>
        <end position="166"/>
    </location>
    <ligand>
        <name>ATP</name>
        <dbReference type="ChEBI" id="CHEBI:30616"/>
        <note>ligand shared between two neighboring subunits</note>
    </ligand>
</feature>
<feature type="binding site" description="in other chain" evidence="1">
    <location>
        <begin position="230"/>
        <end position="231"/>
    </location>
    <ligand>
        <name>ATP</name>
        <dbReference type="ChEBI" id="CHEBI:30616"/>
        <note>ligand shared between two neighboring subunits</note>
    </ligand>
</feature>
<feature type="binding site" evidence="1">
    <location>
        <position position="239"/>
    </location>
    <ligand>
        <name>ATP</name>
        <dbReference type="ChEBI" id="CHEBI:30616"/>
        <note>ligand shared between two neighboring subunits</note>
    </ligand>
</feature>
<feature type="binding site" evidence="1">
    <location>
        <position position="239"/>
    </location>
    <ligand>
        <name>L-methionine</name>
        <dbReference type="ChEBI" id="CHEBI:57844"/>
        <note>ligand shared between two neighboring subunits</note>
    </ligand>
</feature>
<feature type="binding site" description="in other chain" evidence="1">
    <location>
        <begin position="245"/>
        <end position="246"/>
    </location>
    <ligand>
        <name>ATP</name>
        <dbReference type="ChEBI" id="CHEBI:30616"/>
        <note>ligand shared between two neighboring subunits</note>
    </ligand>
</feature>
<feature type="binding site" evidence="1">
    <location>
        <position position="262"/>
    </location>
    <ligand>
        <name>ATP</name>
        <dbReference type="ChEBI" id="CHEBI:30616"/>
        <note>ligand shared between two neighboring subunits</note>
    </ligand>
</feature>
<feature type="binding site" evidence="1">
    <location>
        <position position="266"/>
    </location>
    <ligand>
        <name>ATP</name>
        <dbReference type="ChEBI" id="CHEBI:30616"/>
        <note>ligand shared between two neighboring subunits</note>
    </ligand>
</feature>
<feature type="binding site" description="in other chain" evidence="1">
    <location>
        <position position="270"/>
    </location>
    <ligand>
        <name>L-methionine</name>
        <dbReference type="ChEBI" id="CHEBI:57844"/>
        <note>ligand shared between two neighboring subunits</note>
    </ligand>
</feature>
<accession>P43762</accession>
<dbReference type="EC" id="2.5.1.6" evidence="1"/>
<dbReference type="EMBL" id="L42023">
    <property type="protein sequence ID" value="AAC22825.1"/>
    <property type="molecule type" value="Genomic_DNA"/>
</dbReference>
<dbReference type="PIR" id="H64187">
    <property type="entry name" value="H64187"/>
</dbReference>
<dbReference type="RefSeq" id="NP_439330.1">
    <property type="nucleotide sequence ID" value="NC_000907.1"/>
</dbReference>
<dbReference type="SMR" id="P43762"/>
<dbReference type="STRING" id="71421.HI_1172"/>
<dbReference type="EnsemblBacteria" id="AAC22825">
    <property type="protein sequence ID" value="AAC22825"/>
    <property type="gene ID" value="HI_1172"/>
</dbReference>
<dbReference type="KEGG" id="hin:HI_1172"/>
<dbReference type="PATRIC" id="fig|71421.8.peg.1224"/>
<dbReference type="eggNOG" id="COG0192">
    <property type="taxonomic scope" value="Bacteria"/>
</dbReference>
<dbReference type="HOGENOM" id="CLU_041802_1_1_6"/>
<dbReference type="OrthoDB" id="9801686at2"/>
<dbReference type="PhylomeDB" id="P43762"/>
<dbReference type="BioCyc" id="HINF71421:G1GJ1-1206-MONOMER"/>
<dbReference type="UniPathway" id="UPA00315">
    <property type="reaction ID" value="UER00080"/>
</dbReference>
<dbReference type="Proteomes" id="UP000000579">
    <property type="component" value="Chromosome"/>
</dbReference>
<dbReference type="GO" id="GO:0005829">
    <property type="term" value="C:cytosol"/>
    <property type="evidence" value="ECO:0000318"/>
    <property type="project" value="GO_Central"/>
</dbReference>
<dbReference type="GO" id="GO:0005524">
    <property type="term" value="F:ATP binding"/>
    <property type="evidence" value="ECO:0007669"/>
    <property type="project" value="UniProtKB-UniRule"/>
</dbReference>
<dbReference type="GO" id="GO:0000287">
    <property type="term" value="F:magnesium ion binding"/>
    <property type="evidence" value="ECO:0007669"/>
    <property type="project" value="UniProtKB-UniRule"/>
</dbReference>
<dbReference type="GO" id="GO:0004478">
    <property type="term" value="F:methionine adenosyltransferase activity"/>
    <property type="evidence" value="ECO:0000318"/>
    <property type="project" value="GO_Central"/>
</dbReference>
<dbReference type="GO" id="GO:0006730">
    <property type="term" value="P:one-carbon metabolic process"/>
    <property type="evidence" value="ECO:0007669"/>
    <property type="project" value="UniProtKB-KW"/>
</dbReference>
<dbReference type="GO" id="GO:0006556">
    <property type="term" value="P:S-adenosylmethionine biosynthetic process"/>
    <property type="evidence" value="ECO:0000318"/>
    <property type="project" value="GO_Central"/>
</dbReference>
<dbReference type="CDD" id="cd18079">
    <property type="entry name" value="S-AdoMet_synt"/>
    <property type="match status" value="1"/>
</dbReference>
<dbReference type="FunFam" id="3.30.300.10:FF:000003">
    <property type="entry name" value="S-adenosylmethionine synthase"/>
    <property type="match status" value="1"/>
</dbReference>
<dbReference type="Gene3D" id="3.30.300.10">
    <property type="match status" value="3"/>
</dbReference>
<dbReference type="HAMAP" id="MF_00086">
    <property type="entry name" value="S_AdoMet_synth1"/>
    <property type="match status" value="1"/>
</dbReference>
<dbReference type="InterPro" id="IPR022631">
    <property type="entry name" value="ADOMET_SYNTHASE_CS"/>
</dbReference>
<dbReference type="InterPro" id="IPR022630">
    <property type="entry name" value="S-AdoMet_synt_C"/>
</dbReference>
<dbReference type="InterPro" id="IPR022629">
    <property type="entry name" value="S-AdoMet_synt_central"/>
</dbReference>
<dbReference type="InterPro" id="IPR022628">
    <property type="entry name" value="S-AdoMet_synt_N"/>
</dbReference>
<dbReference type="InterPro" id="IPR002133">
    <property type="entry name" value="S-AdoMet_synthetase"/>
</dbReference>
<dbReference type="InterPro" id="IPR022636">
    <property type="entry name" value="S-AdoMet_synthetase_sfam"/>
</dbReference>
<dbReference type="NCBIfam" id="TIGR01034">
    <property type="entry name" value="metK"/>
    <property type="match status" value="1"/>
</dbReference>
<dbReference type="PANTHER" id="PTHR11964">
    <property type="entry name" value="S-ADENOSYLMETHIONINE SYNTHETASE"/>
    <property type="match status" value="1"/>
</dbReference>
<dbReference type="Pfam" id="PF02773">
    <property type="entry name" value="S-AdoMet_synt_C"/>
    <property type="match status" value="1"/>
</dbReference>
<dbReference type="Pfam" id="PF02772">
    <property type="entry name" value="S-AdoMet_synt_M"/>
    <property type="match status" value="1"/>
</dbReference>
<dbReference type="Pfam" id="PF00438">
    <property type="entry name" value="S-AdoMet_synt_N"/>
    <property type="match status" value="1"/>
</dbReference>
<dbReference type="PIRSF" id="PIRSF000497">
    <property type="entry name" value="MAT"/>
    <property type="match status" value="1"/>
</dbReference>
<dbReference type="SUPFAM" id="SSF55973">
    <property type="entry name" value="S-adenosylmethionine synthetase"/>
    <property type="match status" value="3"/>
</dbReference>
<dbReference type="PROSITE" id="PS00376">
    <property type="entry name" value="ADOMET_SYNTHASE_1"/>
    <property type="match status" value="1"/>
</dbReference>
<dbReference type="PROSITE" id="PS00377">
    <property type="entry name" value="ADOMET_SYNTHASE_2"/>
    <property type="match status" value="1"/>
</dbReference>
<name>METK_HAEIN</name>
<reference key="1">
    <citation type="journal article" date="1995" name="Science">
        <title>Whole-genome random sequencing and assembly of Haemophilus influenzae Rd.</title>
        <authorList>
            <person name="Fleischmann R.D."/>
            <person name="Adams M.D."/>
            <person name="White O."/>
            <person name="Clayton R.A."/>
            <person name="Kirkness E.F."/>
            <person name="Kerlavage A.R."/>
            <person name="Bult C.J."/>
            <person name="Tomb J.-F."/>
            <person name="Dougherty B.A."/>
            <person name="Merrick J.M."/>
            <person name="McKenney K."/>
            <person name="Sutton G.G."/>
            <person name="FitzHugh W."/>
            <person name="Fields C.A."/>
            <person name="Gocayne J.D."/>
            <person name="Scott J.D."/>
            <person name="Shirley R."/>
            <person name="Liu L.-I."/>
            <person name="Glodek A."/>
            <person name="Kelley J.M."/>
            <person name="Weidman J.F."/>
            <person name="Phillips C.A."/>
            <person name="Spriggs T."/>
            <person name="Hedblom E."/>
            <person name="Cotton M.D."/>
            <person name="Utterback T.R."/>
            <person name="Hanna M.C."/>
            <person name="Nguyen D.T."/>
            <person name="Saudek D.M."/>
            <person name="Brandon R.C."/>
            <person name="Fine L.D."/>
            <person name="Fritchman J.L."/>
            <person name="Fuhrmann J.L."/>
            <person name="Geoghagen N.S.M."/>
            <person name="Gnehm C.L."/>
            <person name="McDonald L.A."/>
            <person name="Small K.V."/>
            <person name="Fraser C.M."/>
            <person name="Smith H.O."/>
            <person name="Venter J.C."/>
        </authorList>
    </citation>
    <scope>NUCLEOTIDE SEQUENCE [LARGE SCALE GENOMIC DNA]</scope>
    <source>
        <strain>ATCC 51907 / DSM 11121 / KW20 / Rd</strain>
    </source>
</reference>
<organism>
    <name type="scientific">Haemophilus influenzae (strain ATCC 51907 / DSM 11121 / KW20 / Rd)</name>
    <dbReference type="NCBI Taxonomy" id="71421"/>
    <lineage>
        <taxon>Bacteria</taxon>
        <taxon>Pseudomonadati</taxon>
        <taxon>Pseudomonadota</taxon>
        <taxon>Gammaproteobacteria</taxon>
        <taxon>Pasteurellales</taxon>
        <taxon>Pasteurellaceae</taxon>
        <taxon>Haemophilus</taxon>
    </lineage>
</organism>
<proteinExistence type="inferred from homology"/>
<comment type="function">
    <text evidence="1">Catalyzes the formation of S-adenosylmethionine (AdoMet) from methionine and ATP. The overall synthetic reaction is composed of two sequential steps, AdoMet formation and the subsequent tripolyphosphate hydrolysis which occurs prior to release of AdoMet from the enzyme.</text>
</comment>
<comment type="catalytic activity">
    <reaction evidence="1">
        <text>L-methionine + ATP + H2O = S-adenosyl-L-methionine + phosphate + diphosphate</text>
        <dbReference type="Rhea" id="RHEA:21080"/>
        <dbReference type="ChEBI" id="CHEBI:15377"/>
        <dbReference type="ChEBI" id="CHEBI:30616"/>
        <dbReference type="ChEBI" id="CHEBI:33019"/>
        <dbReference type="ChEBI" id="CHEBI:43474"/>
        <dbReference type="ChEBI" id="CHEBI:57844"/>
        <dbReference type="ChEBI" id="CHEBI:59789"/>
        <dbReference type="EC" id="2.5.1.6"/>
    </reaction>
</comment>
<comment type="cofactor">
    <cofactor evidence="1">
        <name>Mg(2+)</name>
        <dbReference type="ChEBI" id="CHEBI:18420"/>
    </cofactor>
    <text evidence="1">Binds 2 divalent ions per subunit.</text>
</comment>
<comment type="cofactor">
    <cofactor evidence="1">
        <name>K(+)</name>
        <dbReference type="ChEBI" id="CHEBI:29103"/>
    </cofactor>
    <text evidence="1">Binds 1 potassium ion per subunit.</text>
</comment>
<comment type="pathway">
    <text evidence="1">Amino-acid biosynthesis; S-adenosyl-L-methionine biosynthesis; S-adenosyl-L-methionine from L-methionine: step 1/1.</text>
</comment>
<comment type="subunit">
    <text evidence="1">Homotetramer; dimer of dimers.</text>
</comment>
<comment type="subcellular location">
    <subcellularLocation>
        <location evidence="1">Cytoplasm</location>
    </subcellularLocation>
</comment>
<comment type="similarity">
    <text evidence="1">Belongs to the AdoMet synthase family.</text>
</comment>
<evidence type="ECO:0000255" key="1">
    <source>
        <dbReference type="HAMAP-Rule" id="MF_00086"/>
    </source>
</evidence>
<sequence length="384" mass="41974">MSSYLFTSESVSEGHPDKIADQISDAVLDEILKQDPKARVACETYVKTGMALVGGEITTSAWVDIENLTRKVICDIGYEHSEMGFDGHSCAVLNAIGKQSADINQGVDRENPLDQGAGDQGIMFGYATNETDVLMPAAITYAHRLMEKQSEVRKSGKLAWLRPDAKSQVTLKYEDNKIVGVDAVVLSTQHSEEVSQKDLHEGVMEEIIKPVLPSEWLSKETKFFINPTGRFVIGGPMGDCGLTGRKIIVDTYGGAARHGGGAFSGKEPSKVDRSAAYAARYVAKNIVAAGLADRCEIQLSYAIGVAEPTSIMVETFGTGKVANELLVSLVREFFDLRPYGLIKMLDLIQPIYRETAAYGHFGREQFPWEKVDRAEDLRIAAGLK</sequence>
<keyword id="KW-0067">ATP-binding</keyword>
<keyword id="KW-0963">Cytoplasm</keyword>
<keyword id="KW-0460">Magnesium</keyword>
<keyword id="KW-0479">Metal-binding</keyword>
<keyword id="KW-0547">Nucleotide-binding</keyword>
<keyword id="KW-0554">One-carbon metabolism</keyword>
<keyword id="KW-0630">Potassium</keyword>
<keyword id="KW-1185">Reference proteome</keyword>
<keyword id="KW-0808">Transferase</keyword>